<reference key="1">
    <citation type="journal article" date="2004" name="Proc. Natl. Acad. Sci. U.S.A.">
        <title>Genome sequence of the enterobacterial phytopathogen Erwinia carotovora subsp. atroseptica and characterization of virulence factors.</title>
        <authorList>
            <person name="Bell K.S."/>
            <person name="Sebaihia M."/>
            <person name="Pritchard L."/>
            <person name="Holden M.T.G."/>
            <person name="Hyman L.J."/>
            <person name="Holeva M.C."/>
            <person name="Thomson N.R."/>
            <person name="Bentley S.D."/>
            <person name="Churcher L.J.C."/>
            <person name="Mungall K."/>
            <person name="Atkin R."/>
            <person name="Bason N."/>
            <person name="Brooks K."/>
            <person name="Chillingworth T."/>
            <person name="Clark K."/>
            <person name="Doggett J."/>
            <person name="Fraser A."/>
            <person name="Hance Z."/>
            <person name="Hauser H."/>
            <person name="Jagels K."/>
            <person name="Moule S."/>
            <person name="Norbertczak H."/>
            <person name="Ormond D."/>
            <person name="Price C."/>
            <person name="Quail M.A."/>
            <person name="Sanders M."/>
            <person name="Walker D."/>
            <person name="Whitehead S."/>
            <person name="Salmond G.P.C."/>
            <person name="Birch P.R.J."/>
            <person name="Parkhill J."/>
            <person name="Toth I.K."/>
        </authorList>
    </citation>
    <scope>NUCLEOTIDE SEQUENCE [LARGE SCALE GENOMIC DNA]</scope>
    <source>
        <strain>SCRI 1043 / ATCC BAA-672</strain>
    </source>
</reference>
<gene>
    <name evidence="1" type="primary">pdxJ</name>
    <name type="ordered locus">ECA3275</name>
</gene>
<proteinExistence type="inferred from homology"/>
<comment type="function">
    <text evidence="1">Catalyzes the complicated ring closure reaction between the two acyclic compounds 1-deoxy-D-xylulose-5-phosphate (DXP) and 3-amino-2-oxopropyl phosphate (1-amino-acetone-3-phosphate or AAP) to form pyridoxine 5'-phosphate (PNP) and inorganic phosphate.</text>
</comment>
<comment type="catalytic activity">
    <reaction evidence="1">
        <text>3-amino-2-oxopropyl phosphate + 1-deoxy-D-xylulose 5-phosphate = pyridoxine 5'-phosphate + phosphate + 2 H2O + H(+)</text>
        <dbReference type="Rhea" id="RHEA:15265"/>
        <dbReference type="ChEBI" id="CHEBI:15377"/>
        <dbReference type="ChEBI" id="CHEBI:15378"/>
        <dbReference type="ChEBI" id="CHEBI:43474"/>
        <dbReference type="ChEBI" id="CHEBI:57279"/>
        <dbReference type="ChEBI" id="CHEBI:57792"/>
        <dbReference type="ChEBI" id="CHEBI:58589"/>
        <dbReference type="EC" id="2.6.99.2"/>
    </reaction>
</comment>
<comment type="pathway">
    <text evidence="1">Cofactor biosynthesis; pyridoxine 5'-phosphate biosynthesis; pyridoxine 5'-phosphate from D-erythrose 4-phosphate: step 5/5.</text>
</comment>
<comment type="subunit">
    <text evidence="1">Homooctamer; tetramer of dimers.</text>
</comment>
<comment type="subcellular location">
    <subcellularLocation>
        <location evidence="1">Cytoplasm</location>
    </subcellularLocation>
</comment>
<comment type="similarity">
    <text evidence="1">Belongs to the PNP synthase family.</text>
</comment>
<organism>
    <name type="scientific">Pectobacterium atrosepticum (strain SCRI 1043 / ATCC BAA-672)</name>
    <name type="common">Erwinia carotovora subsp. atroseptica</name>
    <dbReference type="NCBI Taxonomy" id="218491"/>
    <lineage>
        <taxon>Bacteria</taxon>
        <taxon>Pseudomonadati</taxon>
        <taxon>Pseudomonadota</taxon>
        <taxon>Gammaproteobacteria</taxon>
        <taxon>Enterobacterales</taxon>
        <taxon>Pectobacteriaceae</taxon>
        <taxon>Pectobacterium</taxon>
    </lineage>
</organism>
<accession>Q3V7N3</accession>
<evidence type="ECO:0000255" key="1">
    <source>
        <dbReference type="HAMAP-Rule" id="MF_00279"/>
    </source>
</evidence>
<dbReference type="EC" id="2.6.99.2" evidence="1"/>
<dbReference type="EMBL" id="BX950851">
    <property type="protein sequence ID" value="CAG76173.1"/>
    <property type="molecule type" value="Genomic_DNA"/>
</dbReference>
<dbReference type="RefSeq" id="WP_011094793.1">
    <property type="nucleotide sequence ID" value="NC_004547.2"/>
</dbReference>
<dbReference type="SMR" id="Q3V7N3"/>
<dbReference type="STRING" id="218491.ECA3275"/>
<dbReference type="KEGG" id="eca:ECA3275"/>
<dbReference type="PATRIC" id="fig|218491.5.peg.3321"/>
<dbReference type="eggNOG" id="COG0854">
    <property type="taxonomic scope" value="Bacteria"/>
</dbReference>
<dbReference type="HOGENOM" id="CLU_074563_0_0_6"/>
<dbReference type="OrthoDB" id="9806590at2"/>
<dbReference type="UniPathway" id="UPA00244">
    <property type="reaction ID" value="UER00313"/>
</dbReference>
<dbReference type="Proteomes" id="UP000007966">
    <property type="component" value="Chromosome"/>
</dbReference>
<dbReference type="GO" id="GO:0005829">
    <property type="term" value="C:cytosol"/>
    <property type="evidence" value="ECO:0007669"/>
    <property type="project" value="TreeGrafter"/>
</dbReference>
<dbReference type="GO" id="GO:0033856">
    <property type="term" value="F:pyridoxine 5'-phosphate synthase activity"/>
    <property type="evidence" value="ECO:0007669"/>
    <property type="project" value="UniProtKB-EC"/>
</dbReference>
<dbReference type="GO" id="GO:0008615">
    <property type="term" value="P:pyridoxine biosynthetic process"/>
    <property type="evidence" value="ECO:0007669"/>
    <property type="project" value="UniProtKB-UniRule"/>
</dbReference>
<dbReference type="CDD" id="cd00003">
    <property type="entry name" value="PNPsynthase"/>
    <property type="match status" value="1"/>
</dbReference>
<dbReference type="FunFam" id="3.20.20.70:FF:000042">
    <property type="entry name" value="Pyridoxine 5'-phosphate synthase"/>
    <property type="match status" value="1"/>
</dbReference>
<dbReference type="Gene3D" id="3.20.20.70">
    <property type="entry name" value="Aldolase class I"/>
    <property type="match status" value="1"/>
</dbReference>
<dbReference type="HAMAP" id="MF_00279">
    <property type="entry name" value="PdxJ"/>
    <property type="match status" value="1"/>
</dbReference>
<dbReference type="InterPro" id="IPR013785">
    <property type="entry name" value="Aldolase_TIM"/>
</dbReference>
<dbReference type="InterPro" id="IPR004569">
    <property type="entry name" value="PyrdxlP_synth_PdxJ"/>
</dbReference>
<dbReference type="InterPro" id="IPR036130">
    <property type="entry name" value="Pyridoxine-5'_phos_synth"/>
</dbReference>
<dbReference type="NCBIfam" id="TIGR00559">
    <property type="entry name" value="pdxJ"/>
    <property type="match status" value="1"/>
</dbReference>
<dbReference type="NCBIfam" id="NF003623">
    <property type="entry name" value="PRK05265.1-1"/>
    <property type="match status" value="1"/>
</dbReference>
<dbReference type="NCBIfam" id="NF003624">
    <property type="entry name" value="PRK05265.1-2"/>
    <property type="match status" value="1"/>
</dbReference>
<dbReference type="NCBIfam" id="NF003625">
    <property type="entry name" value="PRK05265.1-3"/>
    <property type="match status" value="1"/>
</dbReference>
<dbReference type="NCBIfam" id="NF003627">
    <property type="entry name" value="PRK05265.1-5"/>
    <property type="match status" value="1"/>
</dbReference>
<dbReference type="PANTHER" id="PTHR30456">
    <property type="entry name" value="PYRIDOXINE 5'-PHOSPHATE SYNTHASE"/>
    <property type="match status" value="1"/>
</dbReference>
<dbReference type="PANTHER" id="PTHR30456:SF0">
    <property type="entry name" value="PYRIDOXINE 5'-PHOSPHATE SYNTHASE"/>
    <property type="match status" value="1"/>
</dbReference>
<dbReference type="Pfam" id="PF03740">
    <property type="entry name" value="PdxJ"/>
    <property type="match status" value="1"/>
</dbReference>
<dbReference type="SUPFAM" id="SSF63892">
    <property type="entry name" value="Pyridoxine 5'-phosphate synthase"/>
    <property type="match status" value="1"/>
</dbReference>
<protein>
    <recommendedName>
        <fullName evidence="1">Pyridoxine 5'-phosphate synthase</fullName>
        <shortName evidence="1">PNP synthase</shortName>
        <ecNumber evidence="1">2.6.99.2</ecNumber>
    </recommendedName>
</protein>
<name>PDXJ_PECAS</name>
<keyword id="KW-0963">Cytoplasm</keyword>
<keyword id="KW-0664">Pyridoxine biosynthesis</keyword>
<keyword id="KW-1185">Reference proteome</keyword>
<keyword id="KW-0808">Transferase</keyword>
<feature type="chain" id="PRO_0000231807" description="Pyridoxine 5'-phosphate synthase">
    <location>
        <begin position="1"/>
        <end position="243"/>
    </location>
</feature>
<feature type="active site" description="Proton acceptor" evidence="1">
    <location>
        <position position="45"/>
    </location>
</feature>
<feature type="active site" description="Proton acceptor" evidence="1">
    <location>
        <position position="72"/>
    </location>
</feature>
<feature type="active site" description="Proton donor" evidence="1">
    <location>
        <position position="193"/>
    </location>
</feature>
<feature type="binding site" evidence="1">
    <location>
        <position position="9"/>
    </location>
    <ligand>
        <name>3-amino-2-oxopropyl phosphate</name>
        <dbReference type="ChEBI" id="CHEBI:57279"/>
    </ligand>
</feature>
<feature type="binding site" evidence="1">
    <location>
        <begin position="11"/>
        <end position="12"/>
    </location>
    <ligand>
        <name>1-deoxy-D-xylulose 5-phosphate</name>
        <dbReference type="ChEBI" id="CHEBI:57792"/>
    </ligand>
</feature>
<feature type="binding site" evidence="1">
    <location>
        <position position="20"/>
    </location>
    <ligand>
        <name>3-amino-2-oxopropyl phosphate</name>
        <dbReference type="ChEBI" id="CHEBI:57279"/>
    </ligand>
</feature>
<feature type="binding site" evidence="1">
    <location>
        <position position="47"/>
    </location>
    <ligand>
        <name>1-deoxy-D-xylulose 5-phosphate</name>
        <dbReference type="ChEBI" id="CHEBI:57792"/>
    </ligand>
</feature>
<feature type="binding site" evidence="1">
    <location>
        <position position="52"/>
    </location>
    <ligand>
        <name>1-deoxy-D-xylulose 5-phosphate</name>
        <dbReference type="ChEBI" id="CHEBI:57792"/>
    </ligand>
</feature>
<feature type="binding site" evidence="1">
    <location>
        <position position="102"/>
    </location>
    <ligand>
        <name>1-deoxy-D-xylulose 5-phosphate</name>
        <dbReference type="ChEBI" id="CHEBI:57792"/>
    </ligand>
</feature>
<feature type="binding site" evidence="1">
    <location>
        <position position="194"/>
    </location>
    <ligand>
        <name>3-amino-2-oxopropyl phosphate</name>
        <dbReference type="ChEBI" id="CHEBI:57279"/>
    </ligand>
</feature>
<feature type="binding site" evidence="1">
    <location>
        <begin position="215"/>
        <end position="216"/>
    </location>
    <ligand>
        <name>3-amino-2-oxopropyl phosphate</name>
        <dbReference type="ChEBI" id="CHEBI:57279"/>
    </ligand>
</feature>
<feature type="site" description="Transition state stabilizer" evidence="1">
    <location>
        <position position="153"/>
    </location>
</feature>
<sequence length="243" mass="26658">MAELLLGVNIDHIATLRNARGTPYPDPVQAAFVAEQAGADGITVHLREDRRHITDRDVRILRETLQTRMNLEMAVTEEMLNIACEVKPHFCCLVPEKRQEVTTEGGLDVAGQQEKIDNAVARLSQANILVSLFIDADKRQIDAAVASGAAYIEIHTGAYADAPDDETRQHEFERIRDAATYAAAKGLKVNAGHGLTYHNVLPIAALPEMHELNIGHAIIGRAVISGLKDAVAEMKSLMREARR</sequence>